<sequence length="258" mass="29839">MAFNPLLSLLKADAIFLGQLSKSSFCATSRAFSVFYFTRFKRSAYVSAPFGIEPHDEKELKTIDDNVHSNNLSWQKIQEHEVIRELYRKAAYELPGLTPYTQSFKKPADSQIFRFESDVQMSSFEKMNPKVVVTFKVTNIPLLEEKQRHVLRLLVGPRYNPEEDLVRISSDKYSSALQNKYHLIKILTSLIEESKRNAEKFSHVPLNTGHWKYKKCDKRMPQEWLADATTLTSKKKTTIGKQSHNTVLERESIATTDE</sequence>
<protein>
    <recommendedName>
        <fullName evidence="3">Small ribosomal subunit protein mS35</fullName>
    </recommendedName>
    <alternativeName>
        <fullName>37S ribosomal protein S24, mitochondrial</fullName>
    </alternativeName>
</protein>
<keyword id="KW-0496">Mitochondrion</keyword>
<keyword id="KW-1185">Reference proteome</keyword>
<keyword id="KW-0687">Ribonucleoprotein</keyword>
<keyword id="KW-0689">Ribosomal protein</keyword>
<keyword id="KW-0809">Transit peptide</keyword>
<dbReference type="EMBL" id="CU329670">
    <property type="protein sequence ID" value="CAA90502.1"/>
    <property type="molecule type" value="Genomic_DNA"/>
</dbReference>
<dbReference type="PIR" id="T38563">
    <property type="entry name" value="S58159"/>
</dbReference>
<dbReference type="RefSeq" id="NP_592985.1">
    <property type="nucleotide sequence ID" value="NM_001018385.2"/>
</dbReference>
<dbReference type="SMR" id="Q09705"/>
<dbReference type="BioGRID" id="277934">
    <property type="interactions" value="2"/>
</dbReference>
<dbReference type="ComplexPortal" id="CPX-10315">
    <property type="entry name" value="37S mitochondrial small ribosomal subunit"/>
</dbReference>
<dbReference type="FunCoup" id="Q09705">
    <property type="interactions" value="45"/>
</dbReference>
<dbReference type="STRING" id="284812.Q09705"/>
<dbReference type="PaxDb" id="4896-SPAC2F7.15.1"/>
<dbReference type="EnsemblFungi" id="SPAC2F7.15.1">
    <property type="protein sequence ID" value="SPAC2F7.15.1:pep"/>
    <property type="gene ID" value="SPAC2F7.15"/>
</dbReference>
<dbReference type="GeneID" id="2541429"/>
<dbReference type="KEGG" id="spo:2541429"/>
<dbReference type="PomBase" id="SPAC2F7.15">
    <property type="gene designation" value="rsm24"/>
</dbReference>
<dbReference type="VEuPathDB" id="FungiDB:SPAC2F7.15"/>
<dbReference type="eggNOG" id="KOG3933">
    <property type="taxonomic scope" value="Eukaryota"/>
</dbReference>
<dbReference type="HOGENOM" id="CLU_072379_1_1_1"/>
<dbReference type="InParanoid" id="Q09705"/>
<dbReference type="OMA" id="AMNLKWA"/>
<dbReference type="PhylomeDB" id="Q09705"/>
<dbReference type="PRO" id="PR:Q09705"/>
<dbReference type="Proteomes" id="UP000002485">
    <property type="component" value="Chromosome I"/>
</dbReference>
<dbReference type="GO" id="GO:0005737">
    <property type="term" value="C:cytoplasm"/>
    <property type="evidence" value="ECO:0007005"/>
    <property type="project" value="PomBase"/>
</dbReference>
<dbReference type="GO" id="GO:0005763">
    <property type="term" value="C:mitochondrial small ribosomal subunit"/>
    <property type="evidence" value="ECO:0000318"/>
    <property type="project" value="GO_Central"/>
</dbReference>
<dbReference type="GO" id="GO:0003735">
    <property type="term" value="F:structural constituent of ribosome"/>
    <property type="evidence" value="ECO:0000318"/>
    <property type="project" value="GO_Central"/>
</dbReference>
<dbReference type="GO" id="GO:0032543">
    <property type="term" value="P:mitochondrial translation"/>
    <property type="evidence" value="ECO:0000250"/>
    <property type="project" value="PomBase"/>
</dbReference>
<dbReference type="InterPro" id="IPR017081">
    <property type="entry name" value="Ribosomal_mS35"/>
</dbReference>
<dbReference type="InterPro" id="IPR019349">
    <property type="entry name" value="Ribosomal_mS35_mit"/>
</dbReference>
<dbReference type="InterPro" id="IPR039848">
    <property type="entry name" value="Ribosomal_mS35_mt"/>
</dbReference>
<dbReference type="PANTHER" id="PTHR13490">
    <property type="entry name" value="MITOCHONDRIAL 28S RIBOSOMAL PROTEIN S28"/>
    <property type="match status" value="1"/>
</dbReference>
<dbReference type="PANTHER" id="PTHR13490:SF0">
    <property type="entry name" value="SMALL RIBOSOMAL SUBUNIT PROTEIN MS35"/>
    <property type="match status" value="1"/>
</dbReference>
<dbReference type="Pfam" id="PF10213">
    <property type="entry name" value="MRP-S28"/>
    <property type="match status" value="1"/>
</dbReference>
<dbReference type="PIRSF" id="PIRSF036995">
    <property type="entry name" value="RSM24"/>
    <property type="match status" value="1"/>
</dbReference>
<name>RT24_SCHPO</name>
<accession>Q09705</accession>
<gene>
    <name type="primary">rsm24</name>
    <name type="ORF">SPAC2F7.15</name>
</gene>
<reference key="1">
    <citation type="journal article" date="2002" name="Nature">
        <title>The genome sequence of Schizosaccharomyces pombe.</title>
        <authorList>
            <person name="Wood V."/>
            <person name="Gwilliam R."/>
            <person name="Rajandream M.A."/>
            <person name="Lyne M.H."/>
            <person name="Lyne R."/>
            <person name="Stewart A."/>
            <person name="Sgouros J.G."/>
            <person name="Peat N."/>
            <person name="Hayles J."/>
            <person name="Baker S.G."/>
            <person name="Basham D."/>
            <person name="Bowman S."/>
            <person name="Brooks K."/>
            <person name="Brown D."/>
            <person name="Brown S."/>
            <person name="Chillingworth T."/>
            <person name="Churcher C.M."/>
            <person name="Collins M."/>
            <person name="Connor R."/>
            <person name="Cronin A."/>
            <person name="Davis P."/>
            <person name="Feltwell T."/>
            <person name="Fraser A."/>
            <person name="Gentles S."/>
            <person name="Goble A."/>
            <person name="Hamlin N."/>
            <person name="Harris D.E."/>
            <person name="Hidalgo J."/>
            <person name="Hodgson G."/>
            <person name="Holroyd S."/>
            <person name="Hornsby T."/>
            <person name="Howarth S."/>
            <person name="Huckle E.J."/>
            <person name="Hunt S."/>
            <person name="Jagels K."/>
            <person name="James K.D."/>
            <person name="Jones L."/>
            <person name="Jones M."/>
            <person name="Leather S."/>
            <person name="McDonald S."/>
            <person name="McLean J."/>
            <person name="Mooney P."/>
            <person name="Moule S."/>
            <person name="Mungall K.L."/>
            <person name="Murphy L.D."/>
            <person name="Niblett D."/>
            <person name="Odell C."/>
            <person name="Oliver K."/>
            <person name="O'Neil S."/>
            <person name="Pearson D."/>
            <person name="Quail M.A."/>
            <person name="Rabbinowitsch E."/>
            <person name="Rutherford K.M."/>
            <person name="Rutter S."/>
            <person name="Saunders D."/>
            <person name="Seeger K."/>
            <person name="Sharp S."/>
            <person name="Skelton J."/>
            <person name="Simmonds M.N."/>
            <person name="Squares R."/>
            <person name="Squares S."/>
            <person name="Stevens K."/>
            <person name="Taylor K."/>
            <person name="Taylor R.G."/>
            <person name="Tivey A."/>
            <person name="Walsh S.V."/>
            <person name="Warren T."/>
            <person name="Whitehead S."/>
            <person name="Woodward J.R."/>
            <person name="Volckaert G."/>
            <person name="Aert R."/>
            <person name="Robben J."/>
            <person name="Grymonprez B."/>
            <person name="Weltjens I."/>
            <person name="Vanstreels E."/>
            <person name="Rieger M."/>
            <person name="Schaefer M."/>
            <person name="Mueller-Auer S."/>
            <person name="Gabel C."/>
            <person name="Fuchs M."/>
            <person name="Duesterhoeft A."/>
            <person name="Fritzc C."/>
            <person name="Holzer E."/>
            <person name="Moestl D."/>
            <person name="Hilbert H."/>
            <person name="Borzym K."/>
            <person name="Langer I."/>
            <person name="Beck A."/>
            <person name="Lehrach H."/>
            <person name="Reinhardt R."/>
            <person name="Pohl T.M."/>
            <person name="Eger P."/>
            <person name="Zimmermann W."/>
            <person name="Wedler H."/>
            <person name="Wambutt R."/>
            <person name="Purnelle B."/>
            <person name="Goffeau A."/>
            <person name="Cadieu E."/>
            <person name="Dreano S."/>
            <person name="Gloux S."/>
            <person name="Lelaure V."/>
            <person name="Mottier S."/>
            <person name="Galibert F."/>
            <person name="Aves S.J."/>
            <person name="Xiang Z."/>
            <person name="Hunt C."/>
            <person name="Moore K."/>
            <person name="Hurst S.M."/>
            <person name="Lucas M."/>
            <person name="Rochet M."/>
            <person name="Gaillardin C."/>
            <person name="Tallada V.A."/>
            <person name="Garzon A."/>
            <person name="Thode G."/>
            <person name="Daga R.R."/>
            <person name="Cruzado L."/>
            <person name="Jimenez J."/>
            <person name="Sanchez M."/>
            <person name="del Rey F."/>
            <person name="Benito J."/>
            <person name="Dominguez A."/>
            <person name="Revuelta J.L."/>
            <person name="Moreno S."/>
            <person name="Armstrong J."/>
            <person name="Forsburg S.L."/>
            <person name="Cerutti L."/>
            <person name="Lowe T."/>
            <person name="McCombie W.R."/>
            <person name="Paulsen I."/>
            <person name="Potashkin J."/>
            <person name="Shpakovski G.V."/>
            <person name="Ussery D."/>
            <person name="Barrell B.G."/>
            <person name="Nurse P."/>
        </authorList>
    </citation>
    <scope>NUCLEOTIDE SEQUENCE [LARGE SCALE GENOMIC DNA]</scope>
    <source>
        <strain>972 / ATCC 24843</strain>
    </source>
</reference>
<evidence type="ECO:0000250" key="1">
    <source>
        <dbReference type="UniProtKB" id="Q03976"/>
    </source>
</evidence>
<evidence type="ECO:0000255" key="2"/>
<evidence type="ECO:0000305" key="3"/>
<proteinExistence type="inferred from homology"/>
<comment type="function">
    <text evidence="1">Component of the mitochondrial ribosome (mitoribosome), a dedicated translation machinery responsible for the synthesis of mitochondrial genome-encoded proteins, including at least some of the essential transmembrane subunits of the mitochondrial respiratory chain. The mitoribosomes are attached to the mitochondrial inner membrane and translation products are cotranslationally integrated into the membrane.</text>
</comment>
<comment type="subunit">
    <text evidence="1">Component of the mitochondrial small ribosomal subunit (mt-SSU). Mature yeast 74S mitochondrial ribosomes consist of a small (37S) and a large (54S) subunit. The 37S small subunit contains a 15S ribosomal RNA (15S mt-rRNA) and at least 32 different proteins. The 54S large subunit contains a 21S rRNA (21S mt-rRNA) and at least 45 different proteins.</text>
</comment>
<comment type="subcellular location">
    <subcellularLocation>
        <location evidence="1">Mitochondrion</location>
    </subcellularLocation>
</comment>
<comment type="similarity">
    <text evidence="3">Belongs to the mitochondrion-specific ribosomal protein mS35 family.</text>
</comment>
<organism>
    <name type="scientific">Schizosaccharomyces pombe (strain 972 / ATCC 24843)</name>
    <name type="common">Fission yeast</name>
    <dbReference type="NCBI Taxonomy" id="284812"/>
    <lineage>
        <taxon>Eukaryota</taxon>
        <taxon>Fungi</taxon>
        <taxon>Dikarya</taxon>
        <taxon>Ascomycota</taxon>
        <taxon>Taphrinomycotina</taxon>
        <taxon>Schizosaccharomycetes</taxon>
        <taxon>Schizosaccharomycetales</taxon>
        <taxon>Schizosaccharomycetaceae</taxon>
        <taxon>Schizosaccharomyces</taxon>
    </lineage>
</organism>
<feature type="transit peptide" description="Mitochondrion" evidence="2">
    <location>
        <begin position="1"/>
        <end position="39"/>
    </location>
</feature>
<feature type="chain" id="PRO_0000116385" description="Small ribosomal subunit protein mS35">
    <location>
        <begin position="40"/>
        <end position="258"/>
    </location>
</feature>